<name>LYSM8_BEAB2</name>
<proteinExistence type="evidence at transcript level"/>
<evidence type="ECO:0000255" key="1"/>
<evidence type="ECO:0000255" key="2">
    <source>
        <dbReference type="PROSITE-ProRule" id="PRU01118"/>
    </source>
</evidence>
<evidence type="ECO:0000256" key="3">
    <source>
        <dbReference type="SAM" id="MobiDB-lite"/>
    </source>
</evidence>
<evidence type="ECO:0000269" key="4">
    <source>
    </source>
</evidence>
<evidence type="ECO:0000303" key="5">
    <source>
    </source>
</evidence>
<evidence type="ECO:0000305" key="6"/>
<evidence type="ECO:0000305" key="7">
    <source>
    </source>
</evidence>
<evidence type="ECO:0000305" key="8">
    <source>
    </source>
</evidence>
<dbReference type="EMBL" id="JH725200">
    <property type="protein sequence ID" value="EJP61709.1"/>
    <property type="molecule type" value="Genomic_DNA"/>
</dbReference>
<dbReference type="RefSeq" id="XP_008602669.1">
    <property type="nucleotide sequence ID" value="XM_008604447.1"/>
</dbReference>
<dbReference type="STRING" id="655819.J4KL74"/>
<dbReference type="GeneID" id="19892362"/>
<dbReference type="HOGENOM" id="CLU_010591_0_0_1"/>
<dbReference type="InParanoid" id="J4KL74"/>
<dbReference type="OrthoDB" id="10307at474943"/>
<dbReference type="PHI-base" id="PHI:7381"/>
<dbReference type="Proteomes" id="UP000002762">
    <property type="component" value="Unassembled WGS sequence"/>
</dbReference>
<dbReference type="GO" id="GO:0008061">
    <property type="term" value="F:chitin binding"/>
    <property type="evidence" value="ECO:0007669"/>
    <property type="project" value="UniProtKB-KW"/>
</dbReference>
<dbReference type="CDD" id="cd00118">
    <property type="entry name" value="LysM"/>
    <property type="match status" value="2"/>
</dbReference>
<dbReference type="Gene3D" id="3.10.350.10">
    <property type="entry name" value="LysM domain"/>
    <property type="match status" value="3"/>
</dbReference>
<dbReference type="InterPro" id="IPR052210">
    <property type="entry name" value="LysM1-like"/>
</dbReference>
<dbReference type="InterPro" id="IPR018392">
    <property type="entry name" value="LysM_dom"/>
</dbReference>
<dbReference type="InterPro" id="IPR036779">
    <property type="entry name" value="LysM_dom_sf"/>
</dbReference>
<dbReference type="PANTHER" id="PTHR34997">
    <property type="entry name" value="AM15"/>
    <property type="match status" value="1"/>
</dbReference>
<dbReference type="PANTHER" id="PTHR34997:SF1">
    <property type="entry name" value="PEPTIDOGLYCAN-BINDING LYSIN DOMAIN"/>
    <property type="match status" value="1"/>
</dbReference>
<dbReference type="Pfam" id="PF01476">
    <property type="entry name" value="LysM"/>
    <property type="match status" value="2"/>
</dbReference>
<dbReference type="SMART" id="SM00257">
    <property type="entry name" value="LysM"/>
    <property type="match status" value="2"/>
</dbReference>
<dbReference type="SUPFAM" id="SSF54106">
    <property type="entry name" value="LysM domain"/>
    <property type="match status" value="2"/>
</dbReference>
<dbReference type="PROSITE" id="PS51782">
    <property type="entry name" value="LYSM"/>
    <property type="match status" value="2"/>
</dbReference>
<organism>
    <name type="scientific">Beauveria bassiana (strain ARSEF 2860)</name>
    <name type="common">White muscardine disease fungus</name>
    <name type="synonym">Tritirachium shiotae</name>
    <dbReference type="NCBI Taxonomy" id="655819"/>
    <lineage>
        <taxon>Eukaryota</taxon>
        <taxon>Fungi</taxon>
        <taxon>Dikarya</taxon>
        <taxon>Ascomycota</taxon>
        <taxon>Pezizomycotina</taxon>
        <taxon>Sordariomycetes</taxon>
        <taxon>Hypocreomycetidae</taxon>
        <taxon>Hypocreales</taxon>
        <taxon>Cordycipitaceae</taxon>
        <taxon>Beauveria</taxon>
    </lineage>
</organism>
<comment type="function">
    <text evidence="8">Might have a role in sequestration of chitin oligosaccharides (breakdown products of fungal cell walls that are released during invasion and act as triggers of host immunity) to dampen host defense.</text>
</comment>
<comment type="induction">
    <text evidence="4">Expressed during in vivo infection of insect hosts.</text>
</comment>
<comment type="domain">
    <text evidence="7">The LysM (lysin motif) domains are small globular domains involved in binding chitin in eukaryotes. Blys8 contains 3 LysM domains.</text>
</comment>
<comment type="disruption phenotype">
    <text evidence="4">Does not affect virulence to host insects.</text>
</comment>
<comment type="miscellaneous">
    <text evidence="6">In plants, chitin acts as a microbe-associated molecular pattern (MAMP) that is recognized by lysin motif (LysM)-containing plant cell surface-localized pattern recognition receptors (PRRs) that activate a plethora of downstream immune responses.</text>
</comment>
<comment type="similarity">
    <text evidence="6">Belongs to the secreted LysM effector family.</text>
</comment>
<gene>
    <name evidence="5" type="primary">Blys8</name>
    <name type="ORF">BBA_09350</name>
</gene>
<accession>J4KL74</accession>
<feature type="signal peptide" evidence="1">
    <location>
        <begin position="1"/>
        <end position="19"/>
    </location>
</feature>
<feature type="chain" id="PRO_5003780080" description="Secreted LysM effector Blys8">
    <location>
        <begin position="20"/>
        <end position="401"/>
    </location>
</feature>
<feature type="domain" description="LysM 1" evidence="2">
    <location>
        <begin position="42"/>
        <end position="89"/>
    </location>
</feature>
<feature type="domain" description="LysM 2" evidence="2">
    <location>
        <begin position="146"/>
        <end position="193"/>
    </location>
</feature>
<feature type="domain" description="LysM 3" evidence="2">
    <location>
        <begin position="233"/>
        <end position="279"/>
    </location>
</feature>
<feature type="region of interest" description="Disordered" evidence="3">
    <location>
        <begin position="98"/>
        <end position="137"/>
    </location>
</feature>
<feature type="region of interest" description="Disordered" evidence="3">
    <location>
        <begin position="201"/>
        <end position="223"/>
    </location>
</feature>
<feature type="compositionally biased region" description="Low complexity" evidence="3">
    <location>
        <begin position="98"/>
        <end position="136"/>
    </location>
</feature>
<keyword id="KW-0147">Chitin-binding</keyword>
<keyword id="KW-1185">Reference proteome</keyword>
<keyword id="KW-0677">Repeat</keyword>
<keyword id="KW-0732">Signal</keyword>
<keyword id="KW-0843">Virulence</keyword>
<reference key="1">
    <citation type="journal article" date="2012" name="Sci. Rep.">
        <title>Genomic perspectives on the evolution of fungal entomopathogenicity in Beauveria bassiana.</title>
        <authorList>
            <person name="Xiao G."/>
            <person name="Ying S.-H."/>
            <person name="Zheng P."/>
            <person name="Wang Z.-L."/>
            <person name="Zhang S."/>
            <person name="Xie X.-Q."/>
            <person name="Shang Y."/>
            <person name="St Leger R.J."/>
            <person name="Zhao G.-P."/>
            <person name="Wang C."/>
            <person name="Feng M.-G."/>
        </authorList>
    </citation>
    <scope>NUCLEOTIDE SEQUENCE [LARGE SCALE GENOMIC DNA]</scope>
    <source>
        <strain>ARSEF 2860</strain>
    </source>
</reference>
<reference key="2">
    <citation type="journal article" date="2017" name="Fungal Genet. Biol.">
        <title>Correlation of cell surface proteins of distinct Beauveria bassiana cell types and adaption to varied environment and interaction with the host insect.</title>
        <authorList>
            <person name="Yang Z."/>
            <person name="Jiang H."/>
            <person name="Zhao X."/>
            <person name="Lu Z."/>
            <person name="Luo Z."/>
            <person name="Li X."/>
            <person name="Zhao J."/>
            <person name="Zhang Y."/>
        </authorList>
    </citation>
    <scope>IDENTIFICATION</scope>
    <scope>DOMAIN</scope>
</reference>
<reference key="3">
    <citation type="journal article" date="2017" name="PLoS Pathog.">
        <title>Divergent LysM effectors contribute to the virulence of Beauveria bassiana by evasion of insect immune defenses.</title>
        <authorList>
            <person name="Cen K."/>
            <person name="Li B."/>
            <person name="Lu Y."/>
            <person name="Zhang S."/>
            <person name="Wang C."/>
        </authorList>
    </citation>
    <scope>FUNCTION</scope>
    <scope>INDUCTION</scope>
    <scope>DISRUPTION PHENOTYPE</scope>
</reference>
<protein>
    <recommendedName>
        <fullName evidence="5">Secreted LysM effector Blys8</fullName>
    </recommendedName>
    <alternativeName>
        <fullName evidence="5">LysM domain-containing protein 8</fullName>
    </alternativeName>
</protein>
<sequence length="401" mass="42789">MRTLAIFFIGAAVAAHVSPSHLRPRDPKPKGPVDPGISPYCTYYDEAYDKSYTCDDLLSAWVISKQDFESWNPAVGSDCKLVLGHSYCVEVNHGNPLSTTTTTTTSTTTKTTTKTTTTTTAAPKPTSSAPSGPSPTQDGLVHDCKAYYFVKAGDTCDKISQMYGTFSTAQFIEWNPAVGSSCTGLWAGYYYCVGVPGTPTSRTSTAGPTSTKPANGVTTPQPTQPNMVQDCDQFVYVQPGDQCGTVASRAGVSLSDFLQWNPSTGKDCSGLWANAYACVGVIPAIALSARYHADCTGATHSTEHFNPGTGHCVNTACQVASLDIAAKGTCPDGNVRISYWEQPDCTGSWFGYGYASRGQCRTLWSEGWKFKSLYITCASKESDCVSQNSCTISPIPNNNVC</sequence>